<keyword id="KW-0012">Acyltransferase</keyword>
<keyword id="KW-0808">Transferase</keyword>
<reference key="1">
    <citation type="journal article" date="1989" name="Mol. Gen. Genet.">
        <title>Cloning of histidine genes of Azospirillum brasilense: organization of the ABFH gene cluster and nucleotide sequence of the hisB gene.</title>
        <authorList>
            <person name="Fani R."/>
            <person name="Bazzicalupo M."/>
            <person name="Damiani G."/>
            <person name="Bianchi A."/>
            <person name="Schipani C."/>
            <person name="Sgaramella V."/>
            <person name="Polsinelli M."/>
        </authorList>
    </citation>
    <scope>NUCLEOTIDE SEQUENCE [GENOMIC DNA]</scope>
    <source>
        <strain>Sp6</strain>
    </source>
</reference>
<name>YHI1_AZOBR</name>
<sequence length="168" mass="18550">MTDVTVERIDTLKTGDLHDLCDAADDAVKAGGGFGWVAPPAREIMERYWKGVLVVPERILFVGRLDGVIAGSAQLVKPARNNEAQAHAATLTTSFVAPWARCHGLARRLTVAVEEEARASGFRVLNLDVRETQRRQPSRCTRIWASAVGARIPSMRWWTAKGWPDISM</sequence>
<protein>
    <recommendedName>
        <fullName>Uncharacterized N-acetyltransferase in hisH-hisA intergenic region</fullName>
        <ecNumber>2.3.1.-</ecNumber>
    </recommendedName>
    <alternativeName>
        <fullName>ORF1</fullName>
    </alternativeName>
</protein>
<organism>
    <name type="scientific">Azospirillum brasilense</name>
    <dbReference type="NCBI Taxonomy" id="192"/>
    <lineage>
        <taxon>Bacteria</taxon>
        <taxon>Pseudomonadati</taxon>
        <taxon>Pseudomonadota</taxon>
        <taxon>Alphaproteobacteria</taxon>
        <taxon>Rhodospirillales</taxon>
        <taxon>Azospirillaceae</taxon>
        <taxon>Azospirillum</taxon>
    </lineage>
</organism>
<dbReference type="EC" id="2.3.1.-"/>
<dbReference type="EMBL" id="X61207">
    <property type="protein sequence ID" value="CAA43517.1"/>
    <property type="molecule type" value="Genomic_DNA"/>
</dbReference>
<dbReference type="PIR" id="S16800">
    <property type="entry name" value="S16800"/>
</dbReference>
<dbReference type="SMR" id="P26723"/>
<dbReference type="GO" id="GO:0016747">
    <property type="term" value="F:acyltransferase activity, transferring groups other than amino-acyl groups"/>
    <property type="evidence" value="ECO:0007669"/>
    <property type="project" value="InterPro"/>
</dbReference>
<dbReference type="CDD" id="cd04301">
    <property type="entry name" value="NAT_SF"/>
    <property type="match status" value="1"/>
</dbReference>
<dbReference type="Gene3D" id="3.40.630.30">
    <property type="match status" value="1"/>
</dbReference>
<dbReference type="InterPro" id="IPR016181">
    <property type="entry name" value="Acyl_CoA_acyltransferase"/>
</dbReference>
<dbReference type="InterPro" id="IPR000182">
    <property type="entry name" value="GNAT_dom"/>
</dbReference>
<dbReference type="Pfam" id="PF00583">
    <property type="entry name" value="Acetyltransf_1"/>
    <property type="match status" value="1"/>
</dbReference>
<dbReference type="SUPFAM" id="SSF55729">
    <property type="entry name" value="Acyl-CoA N-acyltransferases (Nat)"/>
    <property type="match status" value="1"/>
</dbReference>
<dbReference type="PROSITE" id="PS51186">
    <property type="entry name" value="GNAT"/>
    <property type="match status" value="1"/>
</dbReference>
<feature type="chain" id="PRO_0000066252" description="Uncharacterized N-acetyltransferase in hisH-hisA intergenic region">
    <location>
        <begin position="1"/>
        <end position="168"/>
    </location>
</feature>
<feature type="domain" description="N-acetyltransferase" evidence="1">
    <location>
        <begin position="7"/>
        <end position="168"/>
    </location>
</feature>
<evidence type="ECO:0000255" key="1">
    <source>
        <dbReference type="PROSITE-ProRule" id="PRU00532"/>
    </source>
</evidence>
<proteinExistence type="predicted"/>
<accession>P26723</accession>